<keyword id="KW-0963">Cytoplasm</keyword>
<keyword id="KW-0378">Hydrolase</keyword>
<keyword id="KW-0694">RNA-binding</keyword>
<keyword id="KW-0820">tRNA-binding</keyword>
<dbReference type="EC" id="3.1.1.96" evidence="1"/>
<dbReference type="EMBL" id="CT573326">
    <property type="protein sequence ID" value="CAK17722.1"/>
    <property type="molecule type" value="Genomic_DNA"/>
</dbReference>
<dbReference type="RefSeq" id="WP_011536082.1">
    <property type="nucleotide sequence ID" value="NC_008027.1"/>
</dbReference>
<dbReference type="SMR" id="Q1I3R4"/>
<dbReference type="STRING" id="384676.PSEEN5091"/>
<dbReference type="GeneID" id="32808027"/>
<dbReference type="KEGG" id="pen:PSEEN5091"/>
<dbReference type="eggNOG" id="COG1490">
    <property type="taxonomic scope" value="Bacteria"/>
</dbReference>
<dbReference type="HOGENOM" id="CLU_076901_1_1_6"/>
<dbReference type="OrthoDB" id="9801395at2"/>
<dbReference type="Proteomes" id="UP000000658">
    <property type="component" value="Chromosome"/>
</dbReference>
<dbReference type="GO" id="GO:0005737">
    <property type="term" value="C:cytoplasm"/>
    <property type="evidence" value="ECO:0007669"/>
    <property type="project" value="UniProtKB-SubCell"/>
</dbReference>
<dbReference type="GO" id="GO:0051500">
    <property type="term" value="F:D-tyrosyl-tRNA(Tyr) deacylase activity"/>
    <property type="evidence" value="ECO:0007669"/>
    <property type="project" value="TreeGrafter"/>
</dbReference>
<dbReference type="GO" id="GO:0106026">
    <property type="term" value="F:Gly-tRNA(Ala) deacylase activity"/>
    <property type="evidence" value="ECO:0007669"/>
    <property type="project" value="UniProtKB-UniRule"/>
</dbReference>
<dbReference type="GO" id="GO:0043908">
    <property type="term" value="F:Ser(Gly)-tRNA(Ala) hydrolase activity"/>
    <property type="evidence" value="ECO:0007669"/>
    <property type="project" value="UniProtKB-UniRule"/>
</dbReference>
<dbReference type="GO" id="GO:0000049">
    <property type="term" value="F:tRNA binding"/>
    <property type="evidence" value="ECO:0007669"/>
    <property type="project" value="UniProtKB-UniRule"/>
</dbReference>
<dbReference type="GO" id="GO:0019478">
    <property type="term" value="P:D-amino acid catabolic process"/>
    <property type="evidence" value="ECO:0007669"/>
    <property type="project" value="UniProtKB-UniRule"/>
</dbReference>
<dbReference type="CDD" id="cd00563">
    <property type="entry name" value="Dtyr_deacylase"/>
    <property type="match status" value="1"/>
</dbReference>
<dbReference type="FunFam" id="3.50.80.10:FF:000001">
    <property type="entry name" value="D-aminoacyl-tRNA deacylase"/>
    <property type="match status" value="1"/>
</dbReference>
<dbReference type="Gene3D" id="3.50.80.10">
    <property type="entry name" value="D-tyrosyl-tRNA(Tyr) deacylase"/>
    <property type="match status" value="1"/>
</dbReference>
<dbReference type="HAMAP" id="MF_00518">
    <property type="entry name" value="Deacylase_Dtd"/>
    <property type="match status" value="1"/>
</dbReference>
<dbReference type="InterPro" id="IPR003732">
    <property type="entry name" value="Daa-tRNA_deacyls_DTD"/>
</dbReference>
<dbReference type="InterPro" id="IPR023509">
    <property type="entry name" value="DTD-like_sf"/>
</dbReference>
<dbReference type="NCBIfam" id="TIGR00256">
    <property type="entry name" value="D-aminoacyl-tRNA deacylase"/>
    <property type="match status" value="1"/>
</dbReference>
<dbReference type="PANTHER" id="PTHR10472:SF5">
    <property type="entry name" value="D-AMINOACYL-TRNA DEACYLASE 1"/>
    <property type="match status" value="1"/>
</dbReference>
<dbReference type="PANTHER" id="PTHR10472">
    <property type="entry name" value="D-TYROSYL-TRNA TYR DEACYLASE"/>
    <property type="match status" value="1"/>
</dbReference>
<dbReference type="Pfam" id="PF02580">
    <property type="entry name" value="Tyr_Deacylase"/>
    <property type="match status" value="1"/>
</dbReference>
<dbReference type="SUPFAM" id="SSF69500">
    <property type="entry name" value="DTD-like"/>
    <property type="match status" value="1"/>
</dbReference>
<proteinExistence type="inferred from homology"/>
<evidence type="ECO:0000255" key="1">
    <source>
        <dbReference type="HAMAP-Rule" id="MF_00518"/>
    </source>
</evidence>
<sequence>MKGLIQRVRGARVEVAGEIVGAIDNGLLALVAVEPEDTPEHADKLLHKLLNYRVFSDEQGKMNRSLKDIGGGLLLVSQFTLAADTRNGMRPSFSTAAPPALGAELFDYLLQRAQGQHPDVASGRFGADMQVHLVNDGPVTFMLQI</sequence>
<organism>
    <name type="scientific">Pseudomonas entomophila (strain L48)</name>
    <dbReference type="NCBI Taxonomy" id="384676"/>
    <lineage>
        <taxon>Bacteria</taxon>
        <taxon>Pseudomonadati</taxon>
        <taxon>Pseudomonadota</taxon>
        <taxon>Gammaproteobacteria</taxon>
        <taxon>Pseudomonadales</taxon>
        <taxon>Pseudomonadaceae</taxon>
        <taxon>Pseudomonas</taxon>
    </lineage>
</organism>
<gene>
    <name evidence="1" type="primary">dtd</name>
    <name type="ordered locus">PSEEN5091</name>
</gene>
<comment type="function">
    <text evidence="1">An aminoacyl-tRNA editing enzyme that deacylates mischarged D-aminoacyl-tRNAs. Also deacylates mischarged glycyl-tRNA(Ala), protecting cells against glycine mischarging by AlaRS. Acts via tRNA-based rather than protein-based catalysis; rejects L-amino acids rather than detecting D-amino acids in the active site. By recycling D-aminoacyl-tRNA to D-amino acids and free tRNA molecules, this enzyme counteracts the toxicity associated with the formation of D-aminoacyl-tRNA entities in vivo and helps enforce protein L-homochirality.</text>
</comment>
<comment type="catalytic activity">
    <reaction evidence="1">
        <text>glycyl-tRNA(Ala) + H2O = tRNA(Ala) + glycine + H(+)</text>
        <dbReference type="Rhea" id="RHEA:53744"/>
        <dbReference type="Rhea" id="RHEA-COMP:9657"/>
        <dbReference type="Rhea" id="RHEA-COMP:13640"/>
        <dbReference type="ChEBI" id="CHEBI:15377"/>
        <dbReference type="ChEBI" id="CHEBI:15378"/>
        <dbReference type="ChEBI" id="CHEBI:57305"/>
        <dbReference type="ChEBI" id="CHEBI:78442"/>
        <dbReference type="ChEBI" id="CHEBI:78522"/>
        <dbReference type="EC" id="3.1.1.96"/>
    </reaction>
</comment>
<comment type="catalytic activity">
    <reaction evidence="1">
        <text>a D-aminoacyl-tRNA + H2O = a tRNA + a D-alpha-amino acid + H(+)</text>
        <dbReference type="Rhea" id="RHEA:13953"/>
        <dbReference type="Rhea" id="RHEA-COMP:10123"/>
        <dbReference type="Rhea" id="RHEA-COMP:10124"/>
        <dbReference type="ChEBI" id="CHEBI:15377"/>
        <dbReference type="ChEBI" id="CHEBI:15378"/>
        <dbReference type="ChEBI" id="CHEBI:59871"/>
        <dbReference type="ChEBI" id="CHEBI:78442"/>
        <dbReference type="ChEBI" id="CHEBI:79333"/>
        <dbReference type="EC" id="3.1.1.96"/>
    </reaction>
</comment>
<comment type="subunit">
    <text evidence="1">Homodimer.</text>
</comment>
<comment type="subcellular location">
    <subcellularLocation>
        <location evidence="1">Cytoplasm</location>
    </subcellularLocation>
</comment>
<comment type="domain">
    <text evidence="1">A Gly-cisPro motif from one monomer fits into the active site of the other monomer to allow specific chiral rejection of L-amino acids.</text>
</comment>
<comment type="similarity">
    <text evidence="1">Belongs to the DTD family.</text>
</comment>
<feature type="chain" id="PRO_1000050871" description="D-aminoacyl-tRNA deacylase">
    <location>
        <begin position="1"/>
        <end position="145"/>
    </location>
</feature>
<feature type="short sequence motif" description="Gly-cisPro motif, important for rejection of L-amino acids" evidence="1">
    <location>
        <begin position="137"/>
        <end position="138"/>
    </location>
</feature>
<accession>Q1I3R4</accession>
<reference key="1">
    <citation type="journal article" date="2006" name="Nat. Biotechnol.">
        <title>Complete genome sequence of the entomopathogenic and metabolically versatile soil bacterium Pseudomonas entomophila.</title>
        <authorList>
            <person name="Vodovar N."/>
            <person name="Vallenet D."/>
            <person name="Cruveiller S."/>
            <person name="Rouy Z."/>
            <person name="Barbe V."/>
            <person name="Acosta C."/>
            <person name="Cattolico L."/>
            <person name="Jubin C."/>
            <person name="Lajus A."/>
            <person name="Segurens B."/>
            <person name="Vacherie B."/>
            <person name="Wincker P."/>
            <person name="Weissenbach J."/>
            <person name="Lemaitre B."/>
            <person name="Medigue C."/>
            <person name="Boccard F."/>
        </authorList>
    </citation>
    <scope>NUCLEOTIDE SEQUENCE [LARGE SCALE GENOMIC DNA]</scope>
    <source>
        <strain>L48</strain>
    </source>
</reference>
<protein>
    <recommendedName>
        <fullName evidence="1">D-aminoacyl-tRNA deacylase</fullName>
        <shortName evidence="1">DTD</shortName>
        <ecNumber evidence="1">3.1.1.96</ecNumber>
    </recommendedName>
    <alternativeName>
        <fullName evidence="1">Gly-tRNA(Ala) deacylase</fullName>
    </alternativeName>
</protein>
<name>DTD_PSEE4</name>